<reference key="1">
    <citation type="journal article" date="2002" name="Genome Res.">
        <title>The genome of Methanosarcina acetivorans reveals extensive metabolic and physiological diversity.</title>
        <authorList>
            <person name="Galagan J.E."/>
            <person name="Nusbaum C."/>
            <person name="Roy A."/>
            <person name="Endrizzi M.G."/>
            <person name="Macdonald P."/>
            <person name="FitzHugh W."/>
            <person name="Calvo S."/>
            <person name="Engels R."/>
            <person name="Smirnov S."/>
            <person name="Atnoor D."/>
            <person name="Brown A."/>
            <person name="Allen N."/>
            <person name="Naylor J."/>
            <person name="Stange-Thomann N."/>
            <person name="DeArellano K."/>
            <person name="Johnson R."/>
            <person name="Linton L."/>
            <person name="McEwan P."/>
            <person name="McKernan K."/>
            <person name="Talamas J."/>
            <person name="Tirrell A."/>
            <person name="Ye W."/>
            <person name="Zimmer A."/>
            <person name="Barber R.D."/>
            <person name="Cann I."/>
            <person name="Graham D.E."/>
            <person name="Grahame D.A."/>
            <person name="Guss A.M."/>
            <person name="Hedderich R."/>
            <person name="Ingram-Smith C."/>
            <person name="Kuettner H.C."/>
            <person name="Krzycki J.A."/>
            <person name="Leigh J.A."/>
            <person name="Li W."/>
            <person name="Liu J."/>
            <person name="Mukhopadhyay B."/>
            <person name="Reeve J.N."/>
            <person name="Smith K."/>
            <person name="Springer T.A."/>
            <person name="Umayam L.A."/>
            <person name="White O."/>
            <person name="White R.H."/>
            <person name="de Macario E.C."/>
            <person name="Ferry J.G."/>
            <person name="Jarrell K.F."/>
            <person name="Jing H."/>
            <person name="Macario A.J.L."/>
            <person name="Paulsen I.T."/>
            <person name="Pritchett M."/>
            <person name="Sowers K.R."/>
            <person name="Swanson R.V."/>
            <person name="Zinder S.H."/>
            <person name="Lander E."/>
            <person name="Metcalf W.W."/>
            <person name="Birren B."/>
        </authorList>
    </citation>
    <scope>NUCLEOTIDE SEQUENCE [LARGE SCALE GENOMIC DNA]</scope>
    <source>
        <strain>ATCC 35395 / DSM 2834 / JCM 12185 / C2A</strain>
    </source>
</reference>
<comment type="function">
    <text evidence="1">Part of the ABC transporter complex PstSACB involved in phosphate import. Responsible for energy coupling to the transport system.</text>
</comment>
<comment type="catalytic activity">
    <reaction evidence="1">
        <text>phosphate(out) + ATP + H2O = ADP + 2 phosphate(in) + H(+)</text>
        <dbReference type="Rhea" id="RHEA:24440"/>
        <dbReference type="ChEBI" id="CHEBI:15377"/>
        <dbReference type="ChEBI" id="CHEBI:15378"/>
        <dbReference type="ChEBI" id="CHEBI:30616"/>
        <dbReference type="ChEBI" id="CHEBI:43474"/>
        <dbReference type="ChEBI" id="CHEBI:456216"/>
        <dbReference type="EC" id="7.3.2.1"/>
    </reaction>
</comment>
<comment type="subunit">
    <text evidence="1">The complex is composed of two ATP-binding proteins (PstB), two transmembrane proteins (PstC and PstA) and a solute-binding protein (PstS).</text>
</comment>
<comment type="subcellular location">
    <subcellularLocation>
        <location evidence="1">Cell membrane</location>
        <topology evidence="1">Peripheral membrane protein</topology>
    </subcellularLocation>
</comment>
<comment type="similarity">
    <text evidence="1">Belongs to the ABC transporter superfamily. Phosphate importer (TC 3.A.1.7) family.</text>
</comment>
<keyword id="KW-0067">ATP-binding</keyword>
<keyword id="KW-1003">Cell membrane</keyword>
<keyword id="KW-0472">Membrane</keyword>
<keyword id="KW-0547">Nucleotide-binding</keyword>
<keyword id="KW-0592">Phosphate transport</keyword>
<keyword id="KW-1185">Reference proteome</keyword>
<keyword id="KW-1278">Translocase</keyword>
<keyword id="KW-0813">Transport</keyword>
<protein>
    <recommendedName>
        <fullName evidence="1">Phosphate import ATP-binding protein PstB</fullName>
        <ecNumber evidence="1">7.3.2.1</ecNumber>
    </recommendedName>
    <alternativeName>
        <fullName evidence="1">ABC phosphate transporter</fullName>
    </alternativeName>
    <alternativeName>
        <fullName evidence="1">Phosphate-transporting ATPase</fullName>
    </alternativeName>
</protein>
<organism>
    <name type="scientific">Methanosarcina acetivorans (strain ATCC 35395 / DSM 2834 / JCM 12185 / C2A)</name>
    <dbReference type="NCBI Taxonomy" id="188937"/>
    <lineage>
        <taxon>Archaea</taxon>
        <taxon>Methanobacteriati</taxon>
        <taxon>Methanobacteriota</taxon>
        <taxon>Stenosarchaea group</taxon>
        <taxon>Methanomicrobia</taxon>
        <taxon>Methanosarcinales</taxon>
        <taxon>Methanosarcinaceae</taxon>
        <taxon>Methanosarcina</taxon>
    </lineage>
</organism>
<gene>
    <name evidence="1" type="primary">pstB</name>
    <name type="ordered locus">MA_0890</name>
</gene>
<sequence length="258" mass="29006">MTEAVQNVAQPQIEVENLNLWYGEKQALKNISMQIPKNSVTALIGPSGCGKSTFIRCLNRMNDLIKNCRIEGKVSIEDEDIYEKGVDVVELRKRVGMVFQKPNPFPMSIYDNIAYGPRIHGANKKDLGGIVEFALRSAALWNETSDRLKSTALSLSGGQQQRLCIARTLAVKPEIILFDEPCSALDPISTSRIEELIMNLKKDYTIVIVTHNMQQAARVSDYTGFFLMGELIEFGKTRQIFHNPKEQSTEDYITGRFG</sequence>
<name>PSTB_METAC</name>
<dbReference type="EC" id="7.3.2.1" evidence="1"/>
<dbReference type="EMBL" id="AE010299">
    <property type="protein sequence ID" value="AAM04329.1"/>
    <property type="molecule type" value="Genomic_DNA"/>
</dbReference>
<dbReference type="RefSeq" id="WP_011020934.1">
    <property type="nucleotide sequence ID" value="NC_003552.1"/>
</dbReference>
<dbReference type="SMR" id="Q8TSA8"/>
<dbReference type="FunCoup" id="Q8TSA8">
    <property type="interactions" value="39"/>
</dbReference>
<dbReference type="STRING" id="188937.MA_0890"/>
<dbReference type="EnsemblBacteria" id="AAM04329">
    <property type="protein sequence ID" value="AAM04329"/>
    <property type="gene ID" value="MA_0890"/>
</dbReference>
<dbReference type="GeneID" id="1472782"/>
<dbReference type="KEGG" id="mac:MA_0890"/>
<dbReference type="HOGENOM" id="CLU_000604_1_22_2"/>
<dbReference type="InParanoid" id="Q8TSA8"/>
<dbReference type="OrthoDB" id="31298at2157"/>
<dbReference type="PhylomeDB" id="Q8TSA8"/>
<dbReference type="Proteomes" id="UP000002487">
    <property type="component" value="Chromosome"/>
</dbReference>
<dbReference type="GO" id="GO:0005886">
    <property type="term" value="C:plasma membrane"/>
    <property type="evidence" value="ECO:0007669"/>
    <property type="project" value="UniProtKB-SubCell"/>
</dbReference>
<dbReference type="GO" id="GO:0005524">
    <property type="term" value="F:ATP binding"/>
    <property type="evidence" value="ECO:0007669"/>
    <property type="project" value="UniProtKB-KW"/>
</dbReference>
<dbReference type="GO" id="GO:0016887">
    <property type="term" value="F:ATP hydrolysis activity"/>
    <property type="evidence" value="ECO:0007669"/>
    <property type="project" value="InterPro"/>
</dbReference>
<dbReference type="GO" id="GO:0015415">
    <property type="term" value="F:ATPase-coupled phosphate ion transmembrane transporter activity"/>
    <property type="evidence" value="ECO:0007669"/>
    <property type="project" value="UniProtKB-EC"/>
</dbReference>
<dbReference type="GO" id="GO:0035435">
    <property type="term" value="P:phosphate ion transmembrane transport"/>
    <property type="evidence" value="ECO:0007669"/>
    <property type="project" value="InterPro"/>
</dbReference>
<dbReference type="CDD" id="cd03260">
    <property type="entry name" value="ABC_PstB_phosphate_transporter"/>
    <property type="match status" value="1"/>
</dbReference>
<dbReference type="FunFam" id="3.40.50.300:FF:000132">
    <property type="entry name" value="Phosphate import ATP-binding protein PstB"/>
    <property type="match status" value="1"/>
</dbReference>
<dbReference type="Gene3D" id="3.40.50.300">
    <property type="entry name" value="P-loop containing nucleotide triphosphate hydrolases"/>
    <property type="match status" value="1"/>
</dbReference>
<dbReference type="InterPro" id="IPR003593">
    <property type="entry name" value="AAA+_ATPase"/>
</dbReference>
<dbReference type="InterPro" id="IPR003439">
    <property type="entry name" value="ABC_transporter-like_ATP-bd"/>
</dbReference>
<dbReference type="InterPro" id="IPR017871">
    <property type="entry name" value="ABC_transporter-like_CS"/>
</dbReference>
<dbReference type="InterPro" id="IPR027417">
    <property type="entry name" value="P-loop_NTPase"/>
</dbReference>
<dbReference type="InterPro" id="IPR005670">
    <property type="entry name" value="PstB-like"/>
</dbReference>
<dbReference type="NCBIfam" id="TIGR00972">
    <property type="entry name" value="3a0107s01c2"/>
    <property type="match status" value="1"/>
</dbReference>
<dbReference type="PANTHER" id="PTHR43423">
    <property type="entry name" value="ABC TRANSPORTER I FAMILY MEMBER 17"/>
    <property type="match status" value="1"/>
</dbReference>
<dbReference type="PANTHER" id="PTHR43423:SF1">
    <property type="entry name" value="ABC TRANSPORTER I FAMILY MEMBER 17"/>
    <property type="match status" value="1"/>
</dbReference>
<dbReference type="Pfam" id="PF00005">
    <property type="entry name" value="ABC_tran"/>
    <property type="match status" value="1"/>
</dbReference>
<dbReference type="SMART" id="SM00382">
    <property type="entry name" value="AAA"/>
    <property type="match status" value="1"/>
</dbReference>
<dbReference type="SUPFAM" id="SSF52540">
    <property type="entry name" value="P-loop containing nucleoside triphosphate hydrolases"/>
    <property type="match status" value="1"/>
</dbReference>
<dbReference type="PROSITE" id="PS00211">
    <property type="entry name" value="ABC_TRANSPORTER_1"/>
    <property type="match status" value="1"/>
</dbReference>
<dbReference type="PROSITE" id="PS50893">
    <property type="entry name" value="ABC_TRANSPORTER_2"/>
    <property type="match status" value="1"/>
</dbReference>
<dbReference type="PROSITE" id="PS51238">
    <property type="entry name" value="PSTB"/>
    <property type="match status" value="1"/>
</dbReference>
<evidence type="ECO:0000255" key="1">
    <source>
        <dbReference type="HAMAP-Rule" id="MF_01702"/>
    </source>
</evidence>
<feature type="chain" id="PRO_0000092945" description="Phosphate import ATP-binding protein PstB">
    <location>
        <begin position="1"/>
        <end position="258"/>
    </location>
</feature>
<feature type="domain" description="ABC transporter" evidence="1">
    <location>
        <begin position="13"/>
        <end position="253"/>
    </location>
</feature>
<feature type="binding site" evidence="1">
    <location>
        <begin position="45"/>
        <end position="52"/>
    </location>
    <ligand>
        <name>ATP</name>
        <dbReference type="ChEBI" id="CHEBI:30616"/>
    </ligand>
</feature>
<accession>Q8TSA8</accession>
<proteinExistence type="inferred from homology"/>